<reference key="1">
    <citation type="journal article" date="2013" name="BMC Genomics">
        <title>Genomics-driven discovery of the pneumocandin biosynthetic gene cluster in the fungus Glarea lozoyensis.</title>
        <authorList>
            <person name="Chen L."/>
            <person name="Yue Q."/>
            <person name="Zhang X."/>
            <person name="Xiang M."/>
            <person name="Wang C."/>
            <person name="Li S."/>
            <person name="Che Y."/>
            <person name="Ortiz-Lopez F.J."/>
            <person name="Bills G.F."/>
            <person name="Liu X."/>
            <person name="An Z."/>
        </authorList>
    </citation>
    <scope>NUCLEOTIDE SEQUENCE [LARGE SCALE GENOMIC DNA]</scope>
    <scope>IDENTIFICATION</scope>
    <scope>FUNCTION</scope>
    <source>
        <strain>ATCC 20868 / MF5171</strain>
    </source>
</reference>
<reference key="2">
    <citation type="journal article" date="2014" name="ChemBioChem">
        <title>Pneumocandin biosynthesis: involvement of a trans-selective proline hydroxylase.</title>
        <authorList>
            <person name="Houwaart S."/>
            <person name="Youssar L."/>
            <person name="Huettel W."/>
        </authorList>
    </citation>
    <scope>FUNCTION</scope>
    <scope>CATALYTIC ACTIVITY</scope>
    <scope>BIOPHYSICOCHEMICAL PROPERTIES</scope>
    <scope>PATHWAY</scope>
</reference>
<reference key="3">
    <citation type="journal article" date="2015" name="ACS Chem. Biol.">
        <title>Genetic manipulation of the pneumocandin biosynthetic pathway for generation of analogues and evaluation of their antifungal activity.</title>
        <authorList>
            <person name="Li Y."/>
            <person name="Chen L."/>
            <person name="Yue Q."/>
            <person name="Liu X."/>
            <person name="An Z."/>
            <person name="Bills G.F."/>
        </authorList>
    </citation>
    <scope>FUNCTION</scope>
    <scope>PATHWAY</scope>
    <scope>BIOTECHNOLOGY</scope>
</reference>
<reference key="4">
    <citation type="journal article" date="2015" name="Appl. Environ. Microbiol.">
        <title>Engineering of Glarea lozoyensis for exclusive production of the pneumocandin B0 precursor of the antifungal drug caspofungin acetate.</title>
        <authorList>
            <person name="Chen L."/>
            <person name="Yue Q."/>
            <person name="Li Y."/>
            <person name="Niu X."/>
            <person name="Xiang M."/>
            <person name="Wang W."/>
            <person name="Bills G.F."/>
            <person name="Liu X."/>
            <person name="An Z."/>
        </authorList>
    </citation>
    <scope>FUNCTION</scope>
    <scope>BIOTECHNOLOGY</scope>
</reference>
<reference key="5">
    <citation type="journal article" date="2016" name="ACS Chem. Biol.">
        <title>Engineering of new pneumocandin side-chain analogues from Glarea lozoyensis by mutasynthesis and evaluation of their antifungal activity.</title>
        <authorList>
            <person name="Chen L."/>
            <person name="Li Y."/>
            <person name="Yue Q."/>
            <person name="Loksztejn A."/>
            <person name="Yokoyama K."/>
            <person name="Felix E.A."/>
            <person name="Liu X."/>
            <person name="Zhang N."/>
            <person name="An Z."/>
            <person name="Bills G.F."/>
        </authorList>
    </citation>
    <scope>FUNCTION</scope>
    <scope>BIOTECHNOLOGY</scope>
</reference>
<reference key="6">
    <citation type="journal article" date="2018" name="Appl. Environ. Microbiol.">
        <title>Cryptic production of trans-3-hydroxyproline in echinocandin B biosynthesis.</title>
        <authorList>
            <person name="Mattay J."/>
            <person name="Houwaart S."/>
            <person name="Huettel W."/>
        </authorList>
    </citation>
    <scope>FUNCTION</scope>
</reference>
<reference key="7">
    <citation type="journal article" date="2017" name="Z. Naturforsch. C">
        <title>Structural diversity in echinocandin biosynthesis: the impact of oxidation steps and approaches toward an evolutionary explanation.</title>
        <authorList>
            <person name="Huettel W."/>
        </authorList>
    </citation>
    <scope>REVIEW</scope>
</reference>
<dbReference type="EC" id="1.14.-.-" evidence="2"/>
<dbReference type="EMBL" id="KE145356">
    <property type="protein sequence ID" value="EPE34347.1"/>
    <property type="molecule type" value="Genomic_DNA"/>
</dbReference>
<dbReference type="RefSeq" id="XP_008078282.1">
    <property type="nucleotide sequence ID" value="XM_008080091.1"/>
</dbReference>
<dbReference type="SMR" id="S3D784"/>
<dbReference type="STRING" id="1116229.S3D784"/>
<dbReference type="GeneID" id="19469088"/>
<dbReference type="KEGG" id="glz:GLAREA_10041"/>
<dbReference type="eggNOG" id="KOG0143">
    <property type="taxonomic scope" value="Eukaryota"/>
</dbReference>
<dbReference type="HOGENOM" id="CLU_010119_6_1_1"/>
<dbReference type="OMA" id="FAKITNH"/>
<dbReference type="OrthoDB" id="288590at2759"/>
<dbReference type="Proteomes" id="UP000016922">
    <property type="component" value="Unassembled WGS sequence"/>
</dbReference>
<dbReference type="GO" id="GO:0051213">
    <property type="term" value="F:dioxygenase activity"/>
    <property type="evidence" value="ECO:0007669"/>
    <property type="project" value="UniProtKB-KW"/>
</dbReference>
<dbReference type="GO" id="GO:0046872">
    <property type="term" value="F:metal ion binding"/>
    <property type="evidence" value="ECO:0007669"/>
    <property type="project" value="UniProtKB-KW"/>
</dbReference>
<dbReference type="GO" id="GO:0044283">
    <property type="term" value="P:small molecule biosynthetic process"/>
    <property type="evidence" value="ECO:0007669"/>
    <property type="project" value="UniProtKB-ARBA"/>
</dbReference>
<dbReference type="Gene3D" id="2.60.120.330">
    <property type="entry name" value="B-lactam Antibiotic, Isopenicillin N Synthase, Chain"/>
    <property type="match status" value="1"/>
</dbReference>
<dbReference type="InterPro" id="IPR026992">
    <property type="entry name" value="DIOX_N"/>
</dbReference>
<dbReference type="InterPro" id="IPR044861">
    <property type="entry name" value="IPNS-like_FE2OG_OXY"/>
</dbReference>
<dbReference type="InterPro" id="IPR027443">
    <property type="entry name" value="IPNS-like_sf"/>
</dbReference>
<dbReference type="InterPro" id="IPR050231">
    <property type="entry name" value="Iron_ascorbate_oxido_reductase"/>
</dbReference>
<dbReference type="InterPro" id="IPR005123">
    <property type="entry name" value="Oxoglu/Fe-dep_dioxygenase_dom"/>
</dbReference>
<dbReference type="PANTHER" id="PTHR47990">
    <property type="entry name" value="2-OXOGLUTARATE (2OG) AND FE(II)-DEPENDENT OXYGENASE SUPERFAMILY PROTEIN-RELATED"/>
    <property type="match status" value="1"/>
</dbReference>
<dbReference type="Pfam" id="PF03171">
    <property type="entry name" value="2OG-FeII_Oxy"/>
    <property type="match status" value="1"/>
</dbReference>
<dbReference type="Pfam" id="PF14226">
    <property type="entry name" value="DIOX_N"/>
    <property type="match status" value="1"/>
</dbReference>
<dbReference type="SUPFAM" id="SSF51197">
    <property type="entry name" value="Clavaminate synthase-like"/>
    <property type="match status" value="1"/>
</dbReference>
<dbReference type="PROSITE" id="PS51471">
    <property type="entry name" value="FE2OG_OXY"/>
    <property type="match status" value="1"/>
</dbReference>
<comment type="function">
    <text evidence="2 3 4 5 6 9">2-oxoglutarate-dependent dioxygenase; part of the gene cluster that mediates the biosynthesis of pneumocandins, lipohexapeptides of the echinocandin family that prevent fungal cell wall formation by non-competitive inhibition of beta-1,3-glucan synthase (PubMed:27705900). The 10,12-dimethylmyristoyl side chain is synthesized by the reducing polyketide synthase gloL/GLPKS4 (PubMed:27494047). The thioesterase gloN/GLHYD exclusively interacts with gloL/GLPKS4 to maintain turnover of the polyketide side chain (PubMed:27494047). The 10R,12S-dimethylmyristic acid is then transferred to the first thiolation domain of the nonribosomal peptide synthetase gloA/GLNRPS4 by the acyl-AMP ligase gloD/GLligase, followed by its acylation to L-ornithine to trigger elongation of the cyclic hexapeptide (PubMed:27494047). L-ornithine, 4R-hydroxyl-L-proline (generated from L-proline by the dioxygenase gloF/GLOXY2), 3S-hydroxyl-L-homotyrosine (generated by gloG/GLHtyB, gloH/GLHtyA, gloI/GLHtyC, gloJ/GLHtyD and hydroxylated at C-3 by the dioxygenase gloM/GLOXY1), 3R-hydroxyl-L-glutamine (generated from L-glutamine probably by the dioxygenase gloE/GLOXY3) and 3S-hydroxyl-L-proline (generated from L-proline by the dioxygenase gloF/GLOXY2 to yield pneumocandin B0), or 3S-hydroxyl-4S-methyl-L-proline (generated from L-leucine by the dioxygenase gloC/GLOXY4 to yield pneumocandin A0) are sequentially added to the growing chain (PubMed:25270390, PubMed:25527531, PubMed:25879325). The last C domain of gloA/GLNRPS4 is proposed to be responsible for cyclization by condensation to form the peptide bond between L-ornithine and 3S-hydroxyl-4S-methyl-L-proline (for pneumocandin A0) or 3S-hydroxyl-L-proline (for pneumocandin B0). Finally, the subsequent C-4 hydroxylation of 3S-hydroxyl-L-homotyrosine and L-ornithine dihydroxylation at C-4 and C-5 are performed by the cytochrome P450 monooxygenases gloP/GLP450-1 and gloO/GLP450-2, respectively (PubMed:25879325).</text>
</comment>
<comment type="cofactor">
    <cofactor evidence="1">
        <name>Fe(2+)</name>
        <dbReference type="ChEBI" id="CHEBI:29033"/>
    </cofactor>
    <text evidence="1">Binds 1 Fe(2+) ion per subunit.</text>
</comment>
<comment type="biophysicochemical properties">
    <kinetics>
        <KM evidence="2">8.7 mM for L-proline</KM>
    </kinetics>
</comment>
<comment type="pathway">
    <text evidence="2 11">Mycotoxin biosynthesis.</text>
</comment>
<comment type="biotechnology">
    <text evidence="3 4 5">Pneumocandin B0 is the starting molecule for the first semisynthetic echinocandin antifungal drug, caspofungin acetate (PubMed:25527531). Pneumocandin B0 is a minor fermentation product, and its industrial production was achieved by a combination of extensive mutation and medium optimization (PubMed:25527531). Inactivation of three of gloP/GLP450-1, gloO/GLP450-2, and gloM/GLOXY1 generates 13 different pneumocandin analogs that lack one, two, three, or four hydroxyl groups on 4R,5R-dihydroxy-ornithine and 3S,4S-dihydroxy-homotyrosine of the parent hexapeptide (PubMed:25879325). All of these cyclic lipopeptides show potent antifungal activities, and two new metabolites pneumocandins F and G are more potent in vitro against Candida species and Aspergillus fumigatus than the principal fermentation products, pneumocandins A0 and B0 (PubMed:25879325). Moreover, feeding alternative side chain precursors yields acrophiarin and 4 additional pneumocandin congeners with straight C14, C15, and C16 side chains. One of those compounds, pneumocandin I, has elevated antifungal activity and similar hemolytic activity compared to pneumocandin B0, the starting molecule for caspofungin, demonstrating the potential for using gloD/GLligase for future engineering of new echinocandin analogs (PubMed:27494047).</text>
</comment>
<comment type="similarity">
    <text evidence="10">Belongs to the iron/ascorbate-dependent oxidoreductase family.</text>
</comment>
<feature type="chain" id="PRO_0000444483" description="2-oxoglutarate-dependent dioxygenase gloF">
    <location>
        <begin position="1"/>
        <end position="328"/>
    </location>
</feature>
<feature type="domain" description="Fe2OG dioxygenase" evidence="1">
    <location>
        <begin position="175"/>
        <end position="289"/>
    </location>
</feature>
<feature type="binding site" evidence="1">
    <location>
        <position position="201"/>
    </location>
    <ligand>
        <name>Fe cation</name>
        <dbReference type="ChEBI" id="CHEBI:24875"/>
    </ligand>
</feature>
<feature type="binding site" evidence="1">
    <location>
        <position position="203"/>
    </location>
    <ligand>
        <name>Fe cation</name>
        <dbReference type="ChEBI" id="CHEBI:24875"/>
    </ligand>
</feature>
<feature type="binding site" evidence="1">
    <location>
        <position position="261"/>
    </location>
    <ligand>
        <name>Fe cation</name>
        <dbReference type="ChEBI" id="CHEBI:24875"/>
    </ligand>
</feature>
<feature type="binding site" evidence="1">
    <location>
        <position position="280"/>
    </location>
    <ligand>
        <name>2-oxoglutarate</name>
        <dbReference type="ChEBI" id="CHEBI:16810"/>
    </ligand>
</feature>
<evidence type="ECO:0000255" key="1">
    <source>
        <dbReference type="PROSITE-ProRule" id="PRU00805"/>
    </source>
</evidence>
<evidence type="ECO:0000269" key="2">
    <source>
    </source>
</evidence>
<evidence type="ECO:0000269" key="3">
    <source>
    </source>
</evidence>
<evidence type="ECO:0000269" key="4">
    <source>
    </source>
</evidence>
<evidence type="ECO:0000269" key="5">
    <source>
    </source>
</evidence>
<evidence type="ECO:0000269" key="6">
    <source>
    </source>
</evidence>
<evidence type="ECO:0000303" key="7">
    <source>
    </source>
</evidence>
<evidence type="ECO:0000303" key="8">
    <source>
    </source>
</evidence>
<evidence type="ECO:0000303" key="9">
    <source>
    </source>
</evidence>
<evidence type="ECO:0000305" key="10"/>
<evidence type="ECO:0000305" key="11">
    <source>
    </source>
</evidence>
<keyword id="KW-0223">Dioxygenase</keyword>
<keyword id="KW-0408">Iron</keyword>
<keyword id="KW-0479">Metal-binding</keyword>
<keyword id="KW-0560">Oxidoreductase</keyword>
<keyword id="KW-1185">Reference proteome</keyword>
<protein>
    <recommendedName>
        <fullName evidence="7">2-oxoglutarate-dependent dioxygenase gloF</fullName>
        <ecNumber evidence="2">1.14.-.-</ecNumber>
    </recommendedName>
    <alternativeName>
        <fullName evidence="7">Pneumocandin biosynthesis cluster protein F</fullName>
    </alternativeName>
    <alternativeName>
        <fullName evidence="9">Proline hydroxylase</fullName>
    </alternativeName>
</protein>
<sequence length="328" mass="37988">MAIQTLDYRDFQYGGQEQHRTFCHNLCETLSTWGFIKIQNTSIPDAVIDELFSYNKKFFALPEHIKQKARHPAAPNPHRGWSAVGQEQLSRIAGFEKDEETDGFVPEYRESFDQGAADDELFPNRWIDEDDLPGFRKFMENYYEMCYNFHTQLLRAISTGLSLPEDLLLSRHQTDTSELRMNHYPAIACENLKFGMRIGEHSDFGTLTLLLQDSTGGLQVEDQKKLGTFIPVESDSRYEVIVNVGDCLQRWTNRRLRSANHRVHLPEGKNFKSDEVLADRYSVAYFGKPDRNVLVDSFPEFCRGGESKYNDHMNALEYNQTKLLRTYA</sequence>
<organism>
    <name type="scientific">Glarea lozoyensis (strain ATCC 20868 / MF5171)</name>
    <dbReference type="NCBI Taxonomy" id="1116229"/>
    <lineage>
        <taxon>Eukaryota</taxon>
        <taxon>Fungi</taxon>
        <taxon>Dikarya</taxon>
        <taxon>Ascomycota</taxon>
        <taxon>Pezizomycotina</taxon>
        <taxon>Leotiomycetes</taxon>
        <taxon>Helotiales</taxon>
        <taxon>Helotiaceae</taxon>
        <taxon>Glarea</taxon>
    </lineage>
</organism>
<proteinExistence type="evidence at protein level"/>
<accession>S3D784</accession>
<name>GLOF_GLAL2</name>
<gene>
    <name evidence="7" type="primary">gloF</name>
    <name evidence="8" type="synonym">GLOXY2</name>
    <name type="ORF">GLAREA_10041</name>
</gene>